<name>WHIA_STAEQ</name>
<evidence type="ECO:0000255" key="1">
    <source>
        <dbReference type="HAMAP-Rule" id="MF_01420"/>
    </source>
</evidence>
<comment type="function">
    <text evidence="1">Involved in cell division and chromosome segregation.</text>
</comment>
<comment type="similarity">
    <text evidence="1">Belongs to the WhiA family.</text>
</comment>
<protein>
    <recommendedName>
        <fullName evidence="1">Probable cell division protein WhiA</fullName>
    </recommendedName>
</protein>
<accession>Q5HQW1</accession>
<gene>
    <name evidence="1" type="primary">whiA</name>
    <name type="ordered locus">SERP0435</name>
</gene>
<sequence length="314" mass="35821">MSFASDMKNELTRIEVDESNAKAELSALIRMNGALSLSNQQFVINVQTENATTARRIYSLIKRIFNVEVEILVRKKMKLKKNNIYICRTKMLAKEILNDLGILKKGVFTHDIDPDMIKDDEMKRSYLRGAFLAGGSVNNPETSSYHLEIFSQYEDHSEGLTKLMNSYELNAKHLERKKGSIAYLKEAEKISDFLSLIGGYQALLKFEDVRIVRDMRNSVNRLVNCETANLNKTVSAAMKQVESIQLIDEEIGLENLPDRLREVAKLRVEHQEISLKELGEMVSTGPISKSGMNHRLRKLNELADKIRNGEQIEL</sequence>
<dbReference type="EMBL" id="CP000029">
    <property type="protein sequence ID" value="AAW53857.1"/>
    <property type="molecule type" value="Genomic_DNA"/>
</dbReference>
<dbReference type="RefSeq" id="WP_002438915.1">
    <property type="nucleotide sequence ID" value="NC_002976.3"/>
</dbReference>
<dbReference type="SMR" id="Q5HQW1"/>
<dbReference type="STRING" id="176279.SERP0435"/>
<dbReference type="GeneID" id="50019303"/>
<dbReference type="KEGG" id="ser:SERP0435"/>
<dbReference type="eggNOG" id="COG1481">
    <property type="taxonomic scope" value="Bacteria"/>
</dbReference>
<dbReference type="HOGENOM" id="CLU_053282_0_0_9"/>
<dbReference type="Proteomes" id="UP000000531">
    <property type="component" value="Chromosome"/>
</dbReference>
<dbReference type="GO" id="GO:0003677">
    <property type="term" value="F:DNA binding"/>
    <property type="evidence" value="ECO:0007669"/>
    <property type="project" value="UniProtKB-UniRule"/>
</dbReference>
<dbReference type="GO" id="GO:0051301">
    <property type="term" value="P:cell division"/>
    <property type="evidence" value="ECO:0007669"/>
    <property type="project" value="UniProtKB-UniRule"/>
</dbReference>
<dbReference type="GO" id="GO:0043937">
    <property type="term" value="P:regulation of sporulation"/>
    <property type="evidence" value="ECO:0007669"/>
    <property type="project" value="InterPro"/>
</dbReference>
<dbReference type="FunFam" id="3.10.28.10:FF:000002">
    <property type="entry name" value="Probable cell division protein WhiA"/>
    <property type="match status" value="1"/>
</dbReference>
<dbReference type="Gene3D" id="3.10.28.10">
    <property type="entry name" value="Homing endonucleases"/>
    <property type="match status" value="1"/>
</dbReference>
<dbReference type="HAMAP" id="MF_01420">
    <property type="entry name" value="HTH_type_WhiA"/>
    <property type="match status" value="1"/>
</dbReference>
<dbReference type="InterPro" id="IPR027434">
    <property type="entry name" value="Homing_endonucl"/>
</dbReference>
<dbReference type="InterPro" id="IPR018478">
    <property type="entry name" value="Sporu_reg_WhiA_N_dom"/>
</dbReference>
<dbReference type="InterPro" id="IPR003802">
    <property type="entry name" value="Sporulation_regulator_WhiA"/>
</dbReference>
<dbReference type="InterPro" id="IPR023054">
    <property type="entry name" value="Sporulation_regulator_WhiA_C"/>
</dbReference>
<dbReference type="InterPro" id="IPR039518">
    <property type="entry name" value="WhiA_LAGLIDADG_dom"/>
</dbReference>
<dbReference type="NCBIfam" id="TIGR00647">
    <property type="entry name" value="DNA_bind_WhiA"/>
    <property type="match status" value="1"/>
</dbReference>
<dbReference type="PANTHER" id="PTHR37307">
    <property type="entry name" value="CELL DIVISION PROTEIN WHIA-RELATED"/>
    <property type="match status" value="1"/>
</dbReference>
<dbReference type="PANTHER" id="PTHR37307:SF1">
    <property type="entry name" value="CELL DIVISION PROTEIN WHIA-RELATED"/>
    <property type="match status" value="1"/>
</dbReference>
<dbReference type="Pfam" id="PF02650">
    <property type="entry name" value="HTH_WhiA"/>
    <property type="match status" value="1"/>
</dbReference>
<dbReference type="Pfam" id="PF14527">
    <property type="entry name" value="LAGLIDADG_WhiA"/>
    <property type="match status" value="1"/>
</dbReference>
<dbReference type="Pfam" id="PF10298">
    <property type="entry name" value="WhiA_N"/>
    <property type="match status" value="1"/>
</dbReference>
<dbReference type="SUPFAM" id="SSF55608">
    <property type="entry name" value="Homing endonucleases"/>
    <property type="match status" value="1"/>
</dbReference>
<reference key="1">
    <citation type="journal article" date="2005" name="J. Bacteriol.">
        <title>Insights on evolution of virulence and resistance from the complete genome analysis of an early methicillin-resistant Staphylococcus aureus strain and a biofilm-producing methicillin-resistant Staphylococcus epidermidis strain.</title>
        <authorList>
            <person name="Gill S.R."/>
            <person name="Fouts D.E."/>
            <person name="Archer G.L."/>
            <person name="Mongodin E.F."/>
            <person name="DeBoy R.T."/>
            <person name="Ravel J."/>
            <person name="Paulsen I.T."/>
            <person name="Kolonay J.F."/>
            <person name="Brinkac L.M."/>
            <person name="Beanan M.J."/>
            <person name="Dodson R.J."/>
            <person name="Daugherty S.C."/>
            <person name="Madupu R."/>
            <person name="Angiuoli S.V."/>
            <person name="Durkin A.S."/>
            <person name="Haft D.H."/>
            <person name="Vamathevan J.J."/>
            <person name="Khouri H."/>
            <person name="Utterback T.R."/>
            <person name="Lee C."/>
            <person name="Dimitrov G."/>
            <person name="Jiang L."/>
            <person name="Qin H."/>
            <person name="Weidman J."/>
            <person name="Tran K."/>
            <person name="Kang K.H."/>
            <person name="Hance I.R."/>
            <person name="Nelson K.E."/>
            <person name="Fraser C.M."/>
        </authorList>
    </citation>
    <scope>NUCLEOTIDE SEQUENCE [LARGE SCALE GENOMIC DNA]</scope>
    <source>
        <strain>ATCC 35984 / DSM 28319 / BCRC 17069 / CCUG 31568 / BM 3577 / RP62A</strain>
    </source>
</reference>
<proteinExistence type="inferred from homology"/>
<organism>
    <name type="scientific">Staphylococcus epidermidis (strain ATCC 35984 / DSM 28319 / BCRC 17069 / CCUG 31568 / BM 3577 / RP62A)</name>
    <dbReference type="NCBI Taxonomy" id="176279"/>
    <lineage>
        <taxon>Bacteria</taxon>
        <taxon>Bacillati</taxon>
        <taxon>Bacillota</taxon>
        <taxon>Bacilli</taxon>
        <taxon>Bacillales</taxon>
        <taxon>Staphylococcaceae</taxon>
        <taxon>Staphylococcus</taxon>
    </lineage>
</organism>
<feature type="chain" id="PRO_0000376567" description="Probable cell division protein WhiA">
    <location>
        <begin position="1"/>
        <end position="314"/>
    </location>
</feature>
<feature type="DNA-binding region" description="H-T-H motif" evidence="1">
    <location>
        <begin position="274"/>
        <end position="308"/>
    </location>
</feature>
<keyword id="KW-0131">Cell cycle</keyword>
<keyword id="KW-0132">Cell division</keyword>
<keyword id="KW-0238">DNA-binding</keyword>
<keyword id="KW-1185">Reference proteome</keyword>